<reference key="1">
    <citation type="journal article" date="2004" name="Nucleic Acids Res.">
        <title>Whole genome comparisons of serotype 4b and 1/2a strains of the food-borne pathogen Listeria monocytogenes reveal new insights into the core genome components of this species.</title>
        <authorList>
            <person name="Nelson K.E."/>
            <person name="Fouts D.E."/>
            <person name="Mongodin E.F."/>
            <person name="Ravel J."/>
            <person name="DeBoy R.T."/>
            <person name="Kolonay J.F."/>
            <person name="Rasko D.A."/>
            <person name="Angiuoli S.V."/>
            <person name="Gill S.R."/>
            <person name="Paulsen I.T."/>
            <person name="Peterson J.D."/>
            <person name="White O."/>
            <person name="Nelson W.C."/>
            <person name="Nierman W.C."/>
            <person name="Beanan M.J."/>
            <person name="Brinkac L.M."/>
            <person name="Daugherty S.C."/>
            <person name="Dodson R.J."/>
            <person name="Durkin A.S."/>
            <person name="Madupu R."/>
            <person name="Haft D.H."/>
            <person name="Selengut J."/>
            <person name="Van Aken S.E."/>
            <person name="Khouri H.M."/>
            <person name="Fedorova N."/>
            <person name="Forberger H.A."/>
            <person name="Tran B."/>
            <person name="Kathariou S."/>
            <person name="Wonderling L.D."/>
            <person name="Uhlich G.A."/>
            <person name="Bayles D.O."/>
            <person name="Luchansky J.B."/>
            <person name="Fraser C.M."/>
        </authorList>
    </citation>
    <scope>NUCLEOTIDE SEQUENCE [LARGE SCALE GENOMIC DNA]</scope>
    <source>
        <strain>F2365</strain>
    </source>
</reference>
<organism>
    <name type="scientific">Listeria monocytogenes serotype 4b (strain F2365)</name>
    <dbReference type="NCBI Taxonomy" id="265669"/>
    <lineage>
        <taxon>Bacteria</taxon>
        <taxon>Bacillati</taxon>
        <taxon>Bacillota</taxon>
        <taxon>Bacilli</taxon>
        <taxon>Bacillales</taxon>
        <taxon>Listeriaceae</taxon>
        <taxon>Listeria</taxon>
    </lineage>
</organism>
<accession>Q71VZ1</accession>
<sequence>MLDSFKEDPKLRKLLFSGHFGLEKENIRVTSDGKLALTPHPAIFGPKEDNPYIKTDFSESQIEMITPVTDSIDSVYEWLENLHNIVSLRSENELLWPSSNPPILPAEEDIPIAEYKTPDSPDRKYREHLAKGYGKKIQLLSGIHYNFSFPEALIDGLYDKISLPEESKQDFKNRLYLKVAKYFMKNRWLLIYLTGASPVYLADFSKTKHDESLPDGSSALRDGISLRNSNAGYKNKEALYVDYNSFDAYISSISNYIEAGKIESMREFYNPIRLKNAHTDQTVESLAEHGVEYLEIRSIDLNPLESNGISKDELAFIHLFLIKGLLSEDRELCSNNQQLADENENNIALNGLAQPALKNCDNEEISVVEAGLLELNKMSDFIQSLRPEDTKLQAIIEKQKERLLHPEKTIAAQVKQQVTKEGYVDFHLNQAKTYMEETEALAYKLIGAEDMELSTQIIWKDAIARGIKVDVLDRAENFLRFQKGDHVEYVKQASKTSKDNYVSVLMMENKVVTKLVLAEHDIRVPFGDSFSDQALALEAFSLFEDKQIVVKPKSTNYGWGISIFKNKFTLEDYQEALNIAFSYDSSVIIEEFIPGDEFRFLVINDKVEAVLKRVPANVTGDGIHTVRELVEEKNTDPLRGTDHLKPLEKIRTGPEETLMLSMQNLSWDSIPKAEEIIYLRENSNVSTGGDSIDYTEEMDDYFKEIAIRATQVLDAKICGVDIIVPRETIDRDKHAIIELNFNPAMHMHCFPYQGEKKKIGDKILDFLFE</sequence>
<name>GSHAB_LISMF</name>
<protein>
    <recommendedName>
        <fullName evidence="2">Glutathione biosynthesis bifunctional protein GshAB</fullName>
    </recommendedName>
    <alternativeName>
        <fullName evidence="2">Gamma-GCS-GS</fullName>
        <shortName evidence="2">GCS-GS</shortName>
    </alternativeName>
    <domain>
        <recommendedName>
            <fullName evidence="2">Glutamate--cysteine ligase</fullName>
            <ecNumber evidence="2">6.3.2.2</ecNumber>
        </recommendedName>
        <alternativeName>
            <fullName evidence="2">Gamma-ECS</fullName>
            <shortName evidence="2">GCS</shortName>
        </alternativeName>
        <alternativeName>
            <fullName evidence="2">Gamma-glutamylcysteine synthetase</fullName>
        </alternativeName>
    </domain>
    <domain>
        <recommendedName>
            <fullName evidence="2">Glutathione synthetase</fullName>
            <ecNumber evidence="2">6.3.2.3</ecNumber>
        </recommendedName>
        <alternativeName>
            <fullName evidence="2">GSH synthetase</fullName>
            <shortName evidence="2">GS</shortName>
            <shortName evidence="2">GSH-S</shortName>
            <shortName evidence="2">GSHase</shortName>
        </alternativeName>
        <alternativeName>
            <fullName evidence="2">Glutathione synthase</fullName>
        </alternativeName>
    </domain>
</protein>
<dbReference type="EC" id="6.3.2.2" evidence="2"/>
<dbReference type="EC" id="6.3.2.3" evidence="2"/>
<dbReference type="EMBL" id="AE017262">
    <property type="protein sequence ID" value="AAT05525.1"/>
    <property type="status" value="ALT_INIT"/>
    <property type="molecule type" value="Genomic_DNA"/>
</dbReference>
<dbReference type="SMR" id="Q71VZ1"/>
<dbReference type="KEGG" id="lmf:LMOf2365_2760"/>
<dbReference type="HOGENOM" id="CLU_020728_1_0_9"/>
<dbReference type="UniPathway" id="UPA00142">
    <property type="reaction ID" value="UER00209"/>
</dbReference>
<dbReference type="UniPathway" id="UPA00142">
    <property type="reaction ID" value="UER00210"/>
</dbReference>
<dbReference type="PHI-base" id="PHI:3652"/>
<dbReference type="GO" id="GO:0005829">
    <property type="term" value="C:cytosol"/>
    <property type="evidence" value="ECO:0007669"/>
    <property type="project" value="TreeGrafter"/>
</dbReference>
<dbReference type="GO" id="GO:0005524">
    <property type="term" value="F:ATP binding"/>
    <property type="evidence" value="ECO:0007669"/>
    <property type="project" value="UniProtKB-UniRule"/>
</dbReference>
<dbReference type="GO" id="GO:0004357">
    <property type="term" value="F:glutamate-cysteine ligase activity"/>
    <property type="evidence" value="ECO:0007669"/>
    <property type="project" value="UniProtKB-UniRule"/>
</dbReference>
<dbReference type="GO" id="GO:0004363">
    <property type="term" value="F:glutathione synthase activity"/>
    <property type="evidence" value="ECO:0007669"/>
    <property type="project" value="UniProtKB-UniRule"/>
</dbReference>
<dbReference type="GO" id="GO:0046872">
    <property type="term" value="F:metal ion binding"/>
    <property type="evidence" value="ECO:0007669"/>
    <property type="project" value="UniProtKB-KW"/>
</dbReference>
<dbReference type="FunFam" id="3.30.470.20:FF:000077">
    <property type="entry name" value="Glutathione biosynthesis bifunctional protein GshAB"/>
    <property type="match status" value="1"/>
</dbReference>
<dbReference type="Gene3D" id="3.30.590.20">
    <property type="match status" value="1"/>
</dbReference>
<dbReference type="Gene3D" id="3.30.470.20">
    <property type="entry name" value="ATP-grasp fold, B domain"/>
    <property type="match status" value="2"/>
</dbReference>
<dbReference type="HAMAP" id="MF_00782">
    <property type="entry name" value="Glut_biosynth"/>
    <property type="match status" value="1"/>
</dbReference>
<dbReference type="InterPro" id="IPR011761">
    <property type="entry name" value="ATP-grasp"/>
</dbReference>
<dbReference type="InterPro" id="IPR014746">
    <property type="entry name" value="Gln_synth/guanido_kin_cat_dom"/>
</dbReference>
<dbReference type="InterPro" id="IPR007370">
    <property type="entry name" value="Glu_cys_ligase"/>
</dbReference>
<dbReference type="InterPro" id="IPR006335">
    <property type="entry name" value="Glut_biosynth"/>
</dbReference>
<dbReference type="InterPro" id="IPR006334">
    <property type="entry name" value="Glut_cys_ligase"/>
</dbReference>
<dbReference type="InterPro" id="IPR040657">
    <property type="entry name" value="GshAB_ATP-grasp"/>
</dbReference>
<dbReference type="InterPro" id="IPR020561">
    <property type="entry name" value="PRibGlycinamid_synth_ATP-grasp"/>
</dbReference>
<dbReference type="NCBIfam" id="TIGR01435">
    <property type="entry name" value="glu_cys_lig_rel"/>
    <property type="match status" value="1"/>
</dbReference>
<dbReference type="NCBIfam" id="NF002688">
    <property type="entry name" value="PRK02471.1"/>
    <property type="match status" value="1"/>
</dbReference>
<dbReference type="PANTHER" id="PTHR38761">
    <property type="entry name" value="GLUTAMATE--CYSTEINE LIGASE"/>
    <property type="match status" value="1"/>
</dbReference>
<dbReference type="PANTHER" id="PTHR38761:SF1">
    <property type="entry name" value="GLUTAMATE--CYSTEINE LIGASE"/>
    <property type="match status" value="1"/>
</dbReference>
<dbReference type="Pfam" id="PF18419">
    <property type="entry name" value="ATP-grasp_6"/>
    <property type="match status" value="1"/>
</dbReference>
<dbReference type="Pfam" id="PF01071">
    <property type="entry name" value="GARS_A"/>
    <property type="match status" value="1"/>
</dbReference>
<dbReference type="Pfam" id="PF04262">
    <property type="entry name" value="Glu_cys_ligase"/>
    <property type="match status" value="2"/>
</dbReference>
<dbReference type="SUPFAM" id="SSF55931">
    <property type="entry name" value="Glutamine synthetase/guanido kinase"/>
    <property type="match status" value="1"/>
</dbReference>
<dbReference type="SUPFAM" id="SSF56059">
    <property type="entry name" value="Glutathione synthetase ATP-binding domain-like"/>
    <property type="match status" value="1"/>
</dbReference>
<dbReference type="PROSITE" id="PS50975">
    <property type="entry name" value="ATP_GRASP"/>
    <property type="match status" value="1"/>
</dbReference>
<proteinExistence type="inferred from homology"/>
<feature type="chain" id="PRO_0000192554" description="Glutathione biosynthesis bifunctional protein GshAB">
    <location>
        <begin position="1"/>
        <end position="769"/>
    </location>
</feature>
<feature type="domain" description="ATP-grasp" evidence="2">
    <location>
        <begin position="514"/>
        <end position="768"/>
    </location>
</feature>
<feature type="region of interest" description="Glutamate--cysteine ligase">
    <location>
        <begin position="1"/>
        <end position="347"/>
    </location>
</feature>
<feature type="binding site" evidence="2">
    <location>
        <begin position="541"/>
        <end position="599"/>
    </location>
    <ligand>
        <name>ATP</name>
        <dbReference type="ChEBI" id="CHEBI:30616"/>
    </ligand>
</feature>
<feature type="binding site" evidence="2">
    <location>
        <position position="721"/>
    </location>
    <ligand>
        <name>Mg(2+)</name>
        <dbReference type="ChEBI" id="CHEBI:18420"/>
        <label>1</label>
    </ligand>
</feature>
<feature type="binding site" evidence="2">
    <location>
        <position position="721"/>
    </location>
    <ligand>
        <name>Mn(2+)</name>
        <dbReference type="ChEBI" id="CHEBI:29035"/>
        <label>1</label>
    </ligand>
</feature>
<feature type="binding site" evidence="2">
    <location>
        <position position="738"/>
    </location>
    <ligand>
        <name>Mg(2+)</name>
        <dbReference type="ChEBI" id="CHEBI:18420"/>
        <label>1</label>
    </ligand>
</feature>
<feature type="binding site" evidence="2">
    <location>
        <position position="738"/>
    </location>
    <ligand>
        <name>Mg(2+)</name>
        <dbReference type="ChEBI" id="CHEBI:18420"/>
        <label>2</label>
    </ligand>
</feature>
<feature type="binding site" evidence="2">
    <location>
        <position position="738"/>
    </location>
    <ligand>
        <name>Mn(2+)</name>
        <dbReference type="ChEBI" id="CHEBI:29035"/>
        <label>1</label>
    </ligand>
</feature>
<feature type="binding site" evidence="2">
    <location>
        <position position="738"/>
    </location>
    <ligand>
        <name>Mn(2+)</name>
        <dbReference type="ChEBI" id="CHEBI:29035"/>
        <label>2</label>
    </ligand>
</feature>
<feature type="binding site" evidence="2">
    <location>
        <position position="740"/>
    </location>
    <ligand>
        <name>Mg(2+)</name>
        <dbReference type="ChEBI" id="CHEBI:18420"/>
        <label>2</label>
    </ligand>
</feature>
<feature type="binding site" evidence="2">
    <location>
        <position position="740"/>
    </location>
    <ligand>
        <name>Mn(2+)</name>
        <dbReference type="ChEBI" id="CHEBI:29035"/>
        <label>2</label>
    </ligand>
</feature>
<comment type="function">
    <text evidence="2">Synthesizes glutathione from L-glutamate and L-cysteine via gamma-L-glutamyl-L-cysteine.</text>
</comment>
<comment type="catalytic activity">
    <reaction evidence="2">
        <text>L-cysteine + L-glutamate + ATP = gamma-L-glutamyl-L-cysteine + ADP + phosphate + H(+)</text>
        <dbReference type="Rhea" id="RHEA:13285"/>
        <dbReference type="ChEBI" id="CHEBI:15378"/>
        <dbReference type="ChEBI" id="CHEBI:29985"/>
        <dbReference type="ChEBI" id="CHEBI:30616"/>
        <dbReference type="ChEBI" id="CHEBI:35235"/>
        <dbReference type="ChEBI" id="CHEBI:43474"/>
        <dbReference type="ChEBI" id="CHEBI:58173"/>
        <dbReference type="ChEBI" id="CHEBI:456216"/>
        <dbReference type="EC" id="6.3.2.2"/>
    </reaction>
</comment>
<comment type="catalytic activity">
    <reaction evidence="2">
        <text>gamma-L-glutamyl-L-cysteine + glycine + ATP = glutathione + ADP + phosphate + H(+)</text>
        <dbReference type="Rhea" id="RHEA:13557"/>
        <dbReference type="ChEBI" id="CHEBI:15378"/>
        <dbReference type="ChEBI" id="CHEBI:30616"/>
        <dbReference type="ChEBI" id="CHEBI:43474"/>
        <dbReference type="ChEBI" id="CHEBI:57305"/>
        <dbReference type="ChEBI" id="CHEBI:57925"/>
        <dbReference type="ChEBI" id="CHEBI:58173"/>
        <dbReference type="ChEBI" id="CHEBI:456216"/>
        <dbReference type="EC" id="6.3.2.3"/>
    </reaction>
</comment>
<comment type="cofactor">
    <cofactor evidence="1">
        <name>Mg(2+)</name>
        <dbReference type="ChEBI" id="CHEBI:18420"/>
    </cofactor>
    <cofactor evidence="1">
        <name>Mn(2+)</name>
        <dbReference type="ChEBI" id="CHEBI:29035"/>
    </cofactor>
    <text evidence="1">Binds 2 magnesium or manganese ions per subunit.</text>
</comment>
<comment type="pathway">
    <text evidence="2">Sulfur metabolism; glutathione biosynthesis; glutathione from L-cysteine and L-glutamate: step 1/2.</text>
</comment>
<comment type="pathway">
    <text evidence="2">Sulfur metabolism; glutathione biosynthesis; glutathione from L-cysteine and L-glutamate: step 2/2.</text>
</comment>
<comment type="subunit">
    <text evidence="2">Monomer.</text>
</comment>
<comment type="similarity">
    <text evidence="2">In the N-terminal section; belongs to the glutamate--cysteine ligase type 1 family. Type 2 subfamily.</text>
</comment>
<comment type="sequence caution" evidence="3">
    <conflict type="erroneous initiation">
        <sequence resource="EMBL-CDS" id="AAT05525"/>
    </conflict>
</comment>
<gene>
    <name evidence="2" type="primary">gshAB</name>
    <name evidence="2" type="synonym">gshF</name>
    <name type="ordered locus">LMOf2365_2760</name>
</gene>
<keyword id="KW-0067">ATP-binding</keyword>
<keyword id="KW-0317">Glutathione biosynthesis</keyword>
<keyword id="KW-0436">Ligase</keyword>
<keyword id="KW-0460">Magnesium</keyword>
<keyword id="KW-0464">Manganese</keyword>
<keyword id="KW-0479">Metal-binding</keyword>
<keyword id="KW-0511">Multifunctional enzyme</keyword>
<keyword id="KW-0547">Nucleotide-binding</keyword>
<evidence type="ECO:0000250" key="1"/>
<evidence type="ECO:0000255" key="2">
    <source>
        <dbReference type="HAMAP-Rule" id="MF_00782"/>
    </source>
</evidence>
<evidence type="ECO:0000305" key="3"/>